<proteinExistence type="inferred from homology"/>
<feature type="chain" id="PRO_1000072662" description="Nucleotide-binding protein Clos_1967">
    <location>
        <begin position="1"/>
        <end position="163"/>
    </location>
</feature>
<reference key="1">
    <citation type="submission" date="2007-10" db="EMBL/GenBank/DDBJ databases">
        <title>Complete genome of Alkaliphilus oremlandii OhILAs.</title>
        <authorList>
            <person name="Copeland A."/>
            <person name="Lucas S."/>
            <person name="Lapidus A."/>
            <person name="Barry K."/>
            <person name="Detter J.C."/>
            <person name="Glavina del Rio T."/>
            <person name="Hammon N."/>
            <person name="Israni S."/>
            <person name="Dalin E."/>
            <person name="Tice H."/>
            <person name="Pitluck S."/>
            <person name="Chain P."/>
            <person name="Malfatti S."/>
            <person name="Shin M."/>
            <person name="Vergez L."/>
            <person name="Schmutz J."/>
            <person name="Larimer F."/>
            <person name="Land M."/>
            <person name="Hauser L."/>
            <person name="Kyrpides N."/>
            <person name="Mikhailova N."/>
            <person name="Stolz J.F."/>
            <person name="Dawson A."/>
            <person name="Fisher E."/>
            <person name="Crable B."/>
            <person name="Perera E."/>
            <person name="Lisak J."/>
            <person name="Ranganathan M."/>
            <person name="Basu P."/>
            <person name="Richardson P."/>
        </authorList>
    </citation>
    <scope>NUCLEOTIDE SEQUENCE [LARGE SCALE GENOMIC DNA]</scope>
    <source>
        <strain>OhILAs</strain>
    </source>
</reference>
<evidence type="ECO:0000255" key="1">
    <source>
        <dbReference type="HAMAP-Rule" id="MF_00632"/>
    </source>
</evidence>
<sequence length="163" mass="18240">MAKDNSFDIVSQIDLQEVDNAINQSSKEISQRFDLKGTNTTVERNDTEISINAPDDMKLKNVVDILQTKLTQRGISLKALEYGKIEHALGGRAKQVIKLQQGIDKDQAKKITTLIKDSKIKVQASIQGESVRVSGKNRDDLQAAIQLLKEADLPMNLQFTNYR</sequence>
<protein>
    <recommendedName>
        <fullName evidence="1">Nucleotide-binding protein Clos_1967</fullName>
    </recommendedName>
</protein>
<organism>
    <name type="scientific">Alkaliphilus oremlandii (strain OhILAs)</name>
    <name type="common">Clostridium oremlandii (strain OhILAs)</name>
    <dbReference type="NCBI Taxonomy" id="350688"/>
    <lineage>
        <taxon>Bacteria</taxon>
        <taxon>Bacillati</taxon>
        <taxon>Bacillota</taxon>
        <taxon>Clostridia</taxon>
        <taxon>Peptostreptococcales</taxon>
        <taxon>Natronincolaceae</taxon>
        <taxon>Alkaliphilus</taxon>
    </lineage>
</organism>
<accession>A8MI73</accession>
<keyword id="KW-0547">Nucleotide-binding</keyword>
<keyword id="KW-1185">Reference proteome</keyword>
<name>Y1967_ALKOO</name>
<comment type="function">
    <text evidence="1">Nucleotide-binding protein.</text>
</comment>
<comment type="similarity">
    <text evidence="1">Belongs to the YajQ family.</text>
</comment>
<gene>
    <name type="ordered locus">Clos_1967</name>
</gene>
<dbReference type="EMBL" id="CP000853">
    <property type="protein sequence ID" value="ABW19505.1"/>
    <property type="molecule type" value="Genomic_DNA"/>
</dbReference>
<dbReference type="RefSeq" id="WP_012159817.1">
    <property type="nucleotide sequence ID" value="NC_009922.1"/>
</dbReference>
<dbReference type="SMR" id="A8MI73"/>
<dbReference type="STRING" id="350688.Clos_1967"/>
<dbReference type="KEGG" id="aoe:Clos_1967"/>
<dbReference type="eggNOG" id="COG1666">
    <property type="taxonomic scope" value="Bacteria"/>
</dbReference>
<dbReference type="HOGENOM" id="CLU_099839_1_0_9"/>
<dbReference type="OrthoDB" id="9801447at2"/>
<dbReference type="Proteomes" id="UP000000269">
    <property type="component" value="Chromosome"/>
</dbReference>
<dbReference type="GO" id="GO:0005829">
    <property type="term" value="C:cytosol"/>
    <property type="evidence" value="ECO:0007669"/>
    <property type="project" value="TreeGrafter"/>
</dbReference>
<dbReference type="GO" id="GO:0000166">
    <property type="term" value="F:nucleotide binding"/>
    <property type="evidence" value="ECO:0007669"/>
    <property type="project" value="TreeGrafter"/>
</dbReference>
<dbReference type="CDD" id="cd11740">
    <property type="entry name" value="YajQ_like"/>
    <property type="match status" value="1"/>
</dbReference>
<dbReference type="Gene3D" id="3.30.70.860">
    <property type="match status" value="1"/>
</dbReference>
<dbReference type="Gene3D" id="3.30.70.990">
    <property type="entry name" value="YajQ-like, domain 2"/>
    <property type="match status" value="1"/>
</dbReference>
<dbReference type="HAMAP" id="MF_00632">
    <property type="entry name" value="YajQ"/>
    <property type="match status" value="1"/>
</dbReference>
<dbReference type="InterPro" id="IPR007551">
    <property type="entry name" value="DUF520"/>
</dbReference>
<dbReference type="InterPro" id="IPR035571">
    <property type="entry name" value="UPF0234-like_C"/>
</dbReference>
<dbReference type="InterPro" id="IPR035570">
    <property type="entry name" value="UPF0234_N"/>
</dbReference>
<dbReference type="InterPro" id="IPR036183">
    <property type="entry name" value="YajQ-like_sf"/>
</dbReference>
<dbReference type="NCBIfam" id="NF003819">
    <property type="entry name" value="PRK05412.1"/>
    <property type="match status" value="1"/>
</dbReference>
<dbReference type="PANTHER" id="PTHR30476">
    <property type="entry name" value="UPF0234 PROTEIN YAJQ"/>
    <property type="match status" value="1"/>
</dbReference>
<dbReference type="PANTHER" id="PTHR30476:SF0">
    <property type="entry name" value="UPF0234 PROTEIN YAJQ"/>
    <property type="match status" value="1"/>
</dbReference>
<dbReference type="Pfam" id="PF04461">
    <property type="entry name" value="DUF520"/>
    <property type="match status" value="1"/>
</dbReference>
<dbReference type="SUPFAM" id="SSF89963">
    <property type="entry name" value="YajQ-like"/>
    <property type="match status" value="2"/>
</dbReference>